<organism>
    <name type="scientific">Dictyostelium discoideum</name>
    <name type="common">Social amoeba</name>
    <dbReference type="NCBI Taxonomy" id="44689"/>
    <lineage>
        <taxon>Eukaryota</taxon>
        <taxon>Amoebozoa</taxon>
        <taxon>Evosea</taxon>
        <taxon>Eumycetozoa</taxon>
        <taxon>Dictyostelia</taxon>
        <taxon>Dictyosteliales</taxon>
        <taxon>Dictyosteliaceae</taxon>
        <taxon>Dictyostelium</taxon>
    </lineage>
</organism>
<accession>Q86I43</accession>
<accession>Q553Z4</accession>
<reference key="1">
    <citation type="journal article" date="2002" name="Nature">
        <title>Sequence and analysis of chromosome 2 of Dictyostelium discoideum.</title>
        <authorList>
            <person name="Gloeckner G."/>
            <person name="Eichinger L."/>
            <person name="Szafranski K."/>
            <person name="Pachebat J.A."/>
            <person name="Bankier A.T."/>
            <person name="Dear P.H."/>
            <person name="Lehmann R."/>
            <person name="Baumgart C."/>
            <person name="Parra G."/>
            <person name="Abril J.F."/>
            <person name="Guigo R."/>
            <person name="Kumpf K."/>
            <person name="Tunggal B."/>
            <person name="Cox E.C."/>
            <person name="Quail M.A."/>
            <person name="Platzer M."/>
            <person name="Rosenthal A."/>
            <person name="Noegel A.A."/>
        </authorList>
    </citation>
    <scope>NUCLEOTIDE SEQUENCE [LARGE SCALE GENOMIC DNA]</scope>
    <source>
        <strain>AX4</strain>
    </source>
</reference>
<reference key="2">
    <citation type="journal article" date="2005" name="Nature">
        <title>The genome of the social amoeba Dictyostelium discoideum.</title>
        <authorList>
            <person name="Eichinger L."/>
            <person name="Pachebat J.A."/>
            <person name="Gloeckner G."/>
            <person name="Rajandream M.A."/>
            <person name="Sucgang R."/>
            <person name="Berriman M."/>
            <person name="Song J."/>
            <person name="Olsen R."/>
            <person name="Szafranski K."/>
            <person name="Xu Q."/>
            <person name="Tunggal B."/>
            <person name="Kummerfeld S."/>
            <person name="Madera M."/>
            <person name="Konfortov B.A."/>
            <person name="Rivero F."/>
            <person name="Bankier A.T."/>
            <person name="Lehmann R."/>
            <person name="Hamlin N."/>
            <person name="Davies R."/>
            <person name="Gaudet P."/>
            <person name="Fey P."/>
            <person name="Pilcher K."/>
            <person name="Chen G."/>
            <person name="Saunders D."/>
            <person name="Sodergren E.J."/>
            <person name="Davis P."/>
            <person name="Kerhornou A."/>
            <person name="Nie X."/>
            <person name="Hall N."/>
            <person name="Anjard C."/>
            <person name="Hemphill L."/>
            <person name="Bason N."/>
            <person name="Farbrother P."/>
            <person name="Desany B."/>
            <person name="Just E."/>
            <person name="Morio T."/>
            <person name="Rost R."/>
            <person name="Churcher C.M."/>
            <person name="Cooper J."/>
            <person name="Haydock S."/>
            <person name="van Driessche N."/>
            <person name="Cronin A."/>
            <person name="Goodhead I."/>
            <person name="Muzny D.M."/>
            <person name="Mourier T."/>
            <person name="Pain A."/>
            <person name="Lu M."/>
            <person name="Harper D."/>
            <person name="Lindsay R."/>
            <person name="Hauser H."/>
            <person name="James K.D."/>
            <person name="Quiles M."/>
            <person name="Madan Babu M."/>
            <person name="Saito T."/>
            <person name="Buchrieser C."/>
            <person name="Wardroper A."/>
            <person name="Felder M."/>
            <person name="Thangavelu M."/>
            <person name="Johnson D."/>
            <person name="Knights A."/>
            <person name="Loulseged H."/>
            <person name="Mungall K.L."/>
            <person name="Oliver K."/>
            <person name="Price C."/>
            <person name="Quail M.A."/>
            <person name="Urushihara H."/>
            <person name="Hernandez J."/>
            <person name="Rabbinowitsch E."/>
            <person name="Steffen D."/>
            <person name="Sanders M."/>
            <person name="Ma J."/>
            <person name="Kohara Y."/>
            <person name="Sharp S."/>
            <person name="Simmonds M.N."/>
            <person name="Spiegler S."/>
            <person name="Tivey A."/>
            <person name="Sugano S."/>
            <person name="White B."/>
            <person name="Walker D."/>
            <person name="Woodward J.R."/>
            <person name="Winckler T."/>
            <person name="Tanaka Y."/>
            <person name="Shaulsky G."/>
            <person name="Schleicher M."/>
            <person name="Weinstock G.M."/>
            <person name="Rosenthal A."/>
            <person name="Cox E.C."/>
            <person name="Chisholm R.L."/>
            <person name="Gibbs R.A."/>
            <person name="Loomis W.F."/>
            <person name="Platzer M."/>
            <person name="Kay R.R."/>
            <person name="Williams J.G."/>
            <person name="Dear P.H."/>
            <person name="Noegel A.A."/>
            <person name="Barrell B.G."/>
            <person name="Kuspa A."/>
        </authorList>
    </citation>
    <scope>NUCLEOTIDE SEQUENCE [LARGE SCALE GENOMIC DNA]</scope>
    <source>
        <strain>AX4</strain>
    </source>
</reference>
<reference key="3">
    <citation type="journal article" date="2007" name="Curr. Biol.">
        <title>A G protein-coupled receptor with a lipid kinase domain is involved in cell-density sensing.</title>
        <authorList>
            <person name="Bakthavatsalam D."/>
            <person name="Brazill D."/>
            <person name="Gomer R.H."/>
            <person name="Eichinger L."/>
            <person name="Rivero F."/>
            <person name="Noegel A.A."/>
        </authorList>
    </citation>
    <scope>IDENTIFICATION</scope>
</reference>
<reference key="4">
    <citation type="journal article" date="2008" name="BMC Genomics">
        <title>Genome-wide transcriptional changes induced by phagocytosis or growth on bacteria in Dictyostelium.</title>
        <authorList>
            <person name="Sillo A."/>
            <person name="Bloomfield G."/>
            <person name="Balest A."/>
            <person name="Balbo A."/>
            <person name="Pergolizzi B."/>
            <person name="Peracino B."/>
            <person name="Skelton J."/>
            <person name="Ivens A."/>
            <person name="Bozzaro S."/>
        </authorList>
    </citation>
    <scope>INDUCTION [LARGE SCALE ANALYSIS]</scope>
</reference>
<feature type="chain" id="PRO_0000363148" description="Uncharacterized protein DDB_G0275161">
    <location>
        <begin position="1"/>
        <end position="187"/>
    </location>
</feature>
<evidence type="ECO:0000269" key="1">
    <source>
    </source>
</evidence>
<sequence length="187" mass="21788">MLNRNQKYDLHTIILNSKSLRKHHIKEEDVIHLKGDVKEHFYELKIVKEAHNMAFKKCTVEEGLQLRDLFNGEGNIFTTSFHINEDKSELSQLFIDNCIEKGVSAVPHLVYNGASSLLTIDVNGEEYEISRKRLNGLSNYIKSVYSTGDLLEPQDHIFGKIHPSRTFQRTLKKYYMFMKRISELLDN</sequence>
<protein>
    <recommendedName>
        <fullName>Uncharacterized protein DDB_G0275161</fullName>
    </recommendedName>
</protein>
<comment type="induction">
    <text evidence="1">Up-regulated by phagocytic stimuli and growth on bacteria.</text>
</comment>
<dbReference type="EMBL" id="AAFI02000013">
    <property type="protein sequence ID" value="EAL69861.1"/>
    <property type="molecule type" value="Genomic_DNA"/>
</dbReference>
<dbReference type="RefSeq" id="XP_643817.1">
    <property type="nucleotide sequence ID" value="XM_638725.1"/>
</dbReference>
<dbReference type="SMR" id="Q86I43"/>
<dbReference type="PaxDb" id="44689-DDB0238386"/>
<dbReference type="EnsemblProtists" id="EAL69861">
    <property type="protein sequence ID" value="EAL69861"/>
    <property type="gene ID" value="DDB_G0275161"/>
</dbReference>
<dbReference type="GeneID" id="8619864"/>
<dbReference type="KEGG" id="ddi:DDB_G0275161"/>
<dbReference type="dictyBase" id="DDB_G0275161"/>
<dbReference type="VEuPathDB" id="AmoebaDB:DDB_G0275161"/>
<dbReference type="HOGENOM" id="CLU_1450175_0_0_1"/>
<dbReference type="InParanoid" id="Q86I43"/>
<dbReference type="PRO" id="PR:Q86I43"/>
<dbReference type="Proteomes" id="UP000002195">
    <property type="component" value="Chromosome 2"/>
</dbReference>
<keyword id="KW-1185">Reference proteome</keyword>
<proteinExistence type="evidence at transcript level"/>
<gene>
    <name type="ORF">DDB_G0275161</name>
</gene>
<name>Y5161_DICDI</name>